<organismHost>
    <name type="scientific">Acheta domesticus</name>
    <name type="common">House cricket</name>
    <dbReference type="NCBI Taxonomy" id="6997"/>
</organismHost>
<organismHost>
    <name type="scientific">Chilo suppressalis</name>
    <name type="common">Asiatic rice borer moth</name>
    <dbReference type="NCBI Taxonomy" id="168631"/>
</organismHost>
<organismHost>
    <name type="scientific">Gryllus bimaculatus</name>
    <name type="common">Two-spotted cricket</name>
    <dbReference type="NCBI Taxonomy" id="6999"/>
</organismHost>
<organismHost>
    <name type="scientific">Gryllus campestris</name>
    <dbReference type="NCBI Taxonomy" id="58607"/>
</organismHost>
<organismHost>
    <name type="scientific">Spodoptera frugiperda</name>
    <name type="common">Fall armyworm</name>
    <dbReference type="NCBI Taxonomy" id="7108"/>
</organismHost>
<dbReference type="EMBL" id="AF303741">
    <property type="protein sequence ID" value="AAB94468.1"/>
    <property type="molecule type" value="Genomic_DNA"/>
</dbReference>
<dbReference type="PIR" id="T03170">
    <property type="entry name" value="T03170"/>
</dbReference>
<dbReference type="RefSeq" id="NP_149622.1">
    <property type="nucleotide sequence ID" value="NC_003038.1"/>
</dbReference>
<dbReference type="KEGG" id="vg:1733124"/>
<dbReference type="Proteomes" id="UP000001359">
    <property type="component" value="Genome"/>
</dbReference>
<name>159L_IIV6</name>
<sequence length="475" mass="45784">METETNFKIYNPLQQLEQGSIGGGSGSIPAGSVTGGAGGSIANATITNINIAAGTITGGSGGNIAAGTITGGSGGNIAPNTITAGELAAGAAAANINSGPAGAVNGSKVSKADNTNFGVIEFDPSGDLTQTAAGSGIAVLKTGAAAANINAGPAGAINSSQIAGGPFLSSSPGSVTGGPGGNIAAGTVTGGSGGDLAAGTVTGGAGGNIAAGTVTGGAGGNIAANTITAGELAAGAAAANINSGPAGAVNGSQISKADNTNFGVIEFDPSGDLKQTAAGSGIALVKQPAAGTSVTIAGFDSSGTFITSKVGSIVAAAVPNGTSLNFYNIMIRYPTVAPISLQISVAAVGAAPPPGPGFIGIGEQRWIVNTTINPNPPPPANPNPGTTPYLRTESRVTQNSVAVGTFSYLNVNNVATGAISALATPWDNSEQTVQGGAYERYEFYINDGVDASGYRVTAFYFSPSSFITIERLQGN</sequence>
<reference key="1">
    <citation type="journal article" date="2001" name="Virology">
        <title>Analysis of the first complete DNA sequence of an invertebrate iridovirus: coding strategy of the genome of Chilo iridescent virus.</title>
        <authorList>
            <person name="Jakob N.J."/>
            <person name="Mueller K."/>
            <person name="Bahr U."/>
            <person name="Darai G."/>
        </authorList>
    </citation>
    <scope>NUCLEOTIDE SEQUENCE [LARGE SCALE GENOMIC DNA]</scope>
</reference>
<reference key="2">
    <citation type="journal article" date="2007" name="Virol. J.">
        <title>Comparative genomic analysis of the family Iridoviridae: re-annotating and defining the core set of iridovirus genes.</title>
        <authorList>
            <person name="Eaton H.E."/>
            <person name="Metcalf J."/>
            <person name="Penny E."/>
            <person name="Tcherepanov V."/>
            <person name="Upton C."/>
            <person name="Brunetti C.R."/>
        </authorList>
    </citation>
    <scope>GENOME REANNOTATION</scope>
</reference>
<keyword id="KW-1185">Reference proteome</keyword>
<protein>
    <recommendedName>
        <fullName>Uncharacterized protein 159L</fullName>
    </recommendedName>
</protein>
<gene>
    <name type="ORF">IIV6-159L</name>
</gene>
<proteinExistence type="predicted"/>
<feature type="chain" id="PRO_0000378015" description="Uncharacterized protein 159L">
    <location>
        <begin position="1"/>
        <end position="475"/>
    </location>
</feature>
<accession>O55757</accession>
<organism>
    <name type="scientific">Invertebrate iridescent virus 6</name>
    <name type="common">IIV-6</name>
    <name type="synonym">Chilo iridescent virus</name>
    <dbReference type="NCBI Taxonomy" id="176652"/>
    <lineage>
        <taxon>Viruses</taxon>
        <taxon>Varidnaviria</taxon>
        <taxon>Bamfordvirae</taxon>
        <taxon>Nucleocytoviricota</taxon>
        <taxon>Megaviricetes</taxon>
        <taxon>Pimascovirales</taxon>
        <taxon>Iridoviridae</taxon>
        <taxon>Betairidovirinae</taxon>
        <taxon>Iridovirus</taxon>
    </lineage>
</organism>